<dbReference type="EC" id="2.1.1.228" evidence="1"/>
<dbReference type="EMBL" id="AP009389">
    <property type="protein sequence ID" value="BAF59900.1"/>
    <property type="molecule type" value="Genomic_DNA"/>
</dbReference>
<dbReference type="SMR" id="A5D1J4"/>
<dbReference type="STRING" id="370438.PTH_1719"/>
<dbReference type="KEGG" id="pth:PTH_1719"/>
<dbReference type="eggNOG" id="COG0336">
    <property type="taxonomic scope" value="Bacteria"/>
</dbReference>
<dbReference type="HOGENOM" id="CLU_047363_0_1_9"/>
<dbReference type="Proteomes" id="UP000006556">
    <property type="component" value="Chromosome"/>
</dbReference>
<dbReference type="GO" id="GO:0005829">
    <property type="term" value="C:cytosol"/>
    <property type="evidence" value="ECO:0007669"/>
    <property type="project" value="TreeGrafter"/>
</dbReference>
<dbReference type="GO" id="GO:0052906">
    <property type="term" value="F:tRNA (guanine(37)-N1)-methyltransferase activity"/>
    <property type="evidence" value="ECO:0007669"/>
    <property type="project" value="UniProtKB-UniRule"/>
</dbReference>
<dbReference type="GO" id="GO:0002939">
    <property type="term" value="P:tRNA N1-guanine methylation"/>
    <property type="evidence" value="ECO:0007669"/>
    <property type="project" value="TreeGrafter"/>
</dbReference>
<dbReference type="CDD" id="cd18080">
    <property type="entry name" value="TrmD-like"/>
    <property type="match status" value="1"/>
</dbReference>
<dbReference type="FunFam" id="1.10.1270.20:FF:000001">
    <property type="entry name" value="tRNA (guanine-N(1)-)-methyltransferase"/>
    <property type="match status" value="1"/>
</dbReference>
<dbReference type="FunFam" id="3.40.1280.10:FF:000001">
    <property type="entry name" value="tRNA (guanine-N(1)-)-methyltransferase"/>
    <property type="match status" value="1"/>
</dbReference>
<dbReference type="Gene3D" id="3.40.1280.10">
    <property type="match status" value="1"/>
</dbReference>
<dbReference type="Gene3D" id="1.10.1270.20">
    <property type="entry name" value="tRNA(m1g37)methyltransferase, domain 2"/>
    <property type="match status" value="1"/>
</dbReference>
<dbReference type="HAMAP" id="MF_00605">
    <property type="entry name" value="TrmD"/>
    <property type="match status" value="1"/>
</dbReference>
<dbReference type="InterPro" id="IPR029028">
    <property type="entry name" value="Alpha/beta_knot_MTases"/>
</dbReference>
<dbReference type="InterPro" id="IPR023148">
    <property type="entry name" value="tRNA_m1G_MeTrfase_C_sf"/>
</dbReference>
<dbReference type="InterPro" id="IPR002649">
    <property type="entry name" value="tRNA_m1G_MeTrfase_TrmD"/>
</dbReference>
<dbReference type="InterPro" id="IPR029026">
    <property type="entry name" value="tRNA_m1G_MTases_N"/>
</dbReference>
<dbReference type="InterPro" id="IPR016009">
    <property type="entry name" value="tRNA_MeTrfase_TRMD/TRM10"/>
</dbReference>
<dbReference type="NCBIfam" id="NF000648">
    <property type="entry name" value="PRK00026.1"/>
    <property type="match status" value="1"/>
</dbReference>
<dbReference type="NCBIfam" id="TIGR00088">
    <property type="entry name" value="trmD"/>
    <property type="match status" value="1"/>
</dbReference>
<dbReference type="PANTHER" id="PTHR46417">
    <property type="entry name" value="TRNA (GUANINE-N(1)-)-METHYLTRANSFERASE"/>
    <property type="match status" value="1"/>
</dbReference>
<dbReference type="PANTHER" id="PTHR46417:SF1">
    <property type="entry name" value="TRNA (GUANINE-N(1)-)-METHYLTRANSFERASE"/>
    <property type="match status" value="1"/>
</dbReference>
<dbReference type="Pfam" id="PF01746">
    <property type="entry name" value="tRNA_m1G_MT"/>
    <property type="match status" value="1"/>
</dbReference>
<dbReference type="PIRSF" id="PIRSF000386">
    <property type="entry name" value="tRNA_mtase"/>
    <property type="match status" value="1"/>
</dbReference>
<dbReference type="SUPFAM" id="SSF75217">
    <property type="entry name" value="alpha/beta knot"/>
    <property type="match status" value="1"/>
</dbReference>
<evidence type="ECO:0000255" key="1">
    <source>
        <dbReference type="HAMAP-Rule" id="MF_00605"/>
    </source>
</evidence>
<comment type="function">
    <text evidence="1">Specifically methylates guanosine-37 in various tRNAs.</text>
</comment>
<comment type="catalytic activity">
    <reaction evidence="1">
        <text>guanosine(37) in tRNA + S-adenosyl-L-methionine = N(1)-methylguanosine(37) in tRNA + S-adenosyl-L-homocysteine + H(+)</text>
        <dbReference type="Rhea" id="RHEA:36899"/>
        <dbReference type="Rhea" id="RHEA-COMP:10145"/>
        <dbReference type="Rhea" id="RHEA-COMP:10147"/>
        <dbReference type="ChEBI" id="CHEBI:15378"/>
        <dbReference type="ChEBI" id="CHEBI:57856"/>
        <dbReference type="ChEBI" id="CHEBI:59789"/>
        <dbReference type="ChEBI" id="CHEBI:73542"/>
        <dbReference type="ChEBI" id="CHEBI:74269"/>
        <dbReference type="EC" id="2.1.1.228"/>
    </reaction>
</comment>
<comment type="subunit">
    <text evidence="1">Homodimer.</text>
</comment>
<comment type="subcellular location">
    <subcellularLocation>
        <location evidence="1">Cytoplasm</location>
    </subcellularLocation>
</comment>
<comment type="similarity">
    <text evidence="1">Belongs to the RNA methyltransferase TrmD family.</text>
</comment>
<keyword id="KW-0963">Cytoplasm</keyword>
<keyword id="KW-0489">Methyltransferase</keyword>
<keyword id="KW-1185">Reference proteome</keyword>
<keyword id="KW-0949">S-adenosyl-L-methionine</keyword>
<keyword id="KW-0808">Transferase</keyword>
<keyword id="KW-0819">tRNA processing</keyword>
<proteinExistence type="inferred from homology"/>
<accession>A5D1J4</accession>
<name>TRMD_PELTS</name>
<gene>
    <name evidence="1" type="primary">trmD</name>
    <name type="ordered locus">PTH_1719</name>
</gene>
<organism>
    <name type="scientific">Pelotomaculum thermopropionicum (strain DSM 13744 / JCM 10971 / SI)</name>
    <dbReference type="NCBI Taxonomy" id="370438"/>
    <lineage>
        <taxon>Bacteria</taxon>
        <taxon>Bacillati</taxon>
        <taxon>Bacillota</taxon>
        <taxon>Clostridia</taxon>
        <taxon>Eubacteriales</taxon>
        <taxon>Desulfotomaculaceae</taxon>
        <taxon>Pelotomaculum</taxon>
    </lineage>
</organism>
<feature type="chain" id="PRO_1000082527" description="tRNA (guanine-N(1)-)-methyltransferase">
    <location>
        <begin position="1"/>
        <end position="251"/>
    </location>
</feature>
<feature type="binding site" evidence="1">
    <location>
        <position position="114"/>
    </location>
    <ligand>
        <name>S-adenosyl-L-methionine</name>
        <dbReference type="ChEBI" id="CHEBI:59789"/>
    </ligand>
</feature>
<feature type="binding site" evidence="1">
    <location>
        <begin position="134"/>
        <end position="139"/>
    </location>
    <ligand>
        <name>S-adenosyl-L-methionine</name>
        <dbReference type="ChEBI" id="CHEBI:59789"/>
    </ligand>
</feature>
<protein>
    <recommendedName>
        <fullName evidence="1">tRNA (guanine-N(1)-)-methyltransferase</fullName>
        <ecNumber evidence="1">2.1.1.228</ecNumber>
    </recommendedName>
    <alternativeName>
        <fullName evidence="1">M1G-methyltransferase</fullName>
    </alternativeName>
    <alternativeName>
        <fullName evidence="1">tRNA [GM37] methyltransferase</fullName>
    </alternativeName>
</protein>
<reference key="1">
    <citation type="journal article" date="2008" name="Genome Res.">
        <title>The genome of Pelotomaculum thermopropionicum reveals niche-associated evolution in anaerobic microbiota.</title>
        <authorList>
            <person name="Kosaka T."/>
            <person name="Kato S."/>
            <person name="Shimoyama T."/>
            <person name="Ishii S."/>
            <person name="Abe T."/>
            <person name="Watanabe K."/>
        </authorList>
    </citation>
    <scope>NUCLEOTIDE SEQUENCE [LARGE SCALE GENOMIC DNA]</scope>
    <source>
        <strain>DSM 13744 / JCM 10971 / SI</strain>
    </source>
</reference>
<sequence>MKIDILTLFPEMFAGPFSSSILKRAQERGLVEIGLINIRDFSTNKHHTVDDAPYGGGAGMVMGPEALFGAVEHVARKYGSKPGRVVLMCPQGIPFTQAYAADLAREETIVLVCGHYEGIDERVREALVTDEISIGDYVLTGGELPAMVVVDAVARLVPGVLGEALSVMEESFSNGLLEYPHFTRPREFRGLKVPEVLLSGHHEEIRKWRRRQSLLRTLERRPEMLKQAGLTREDREILKELLASLNELDLS</sequence>